<evidence type="ECO:0000250" key="1"/>
<evidence type="ECO:0000256" key="2">
    <source>
        <dbReference type="SAM" id="MobiDB-lite"/>
    </source>
</evidence>
<evidence type="ECO:0000305" key="3"/>
<accession>P26911</accession>
<protein>
    <recommendedName>
        <fullName>Cytochrome P450-SOY</fullName>
        <ecNumber>1.14.-.-</ecNumber>
    </recommendedName>
</protein>
<feature type="chain" id="PRO_0000052217" description="Cytochrome P450-SOY">
    <location>
        <begin position="1"/>
        <end position="412"/>
    </location>
</feature>
<feature type="region of interest" description="Disordered" evidence="2">
    <location>
        <begin position="1"/>
        <end position="38"/>
    </location>
</feature>
<feature type="compositionally biased region" description="Polar residues" evidence="2">
    <location>
        <begin position="1"/>
        <end position="25"/>
    </location>
</feature>
<feature type="binding site" description="axial binding residue" evidence="1">
    <location>
        <position position="361"/>
    </location>
    <ligand>
        <name>heme</name>
        <dbReference type="ChEBI" id="CHEBI:30413"/>
    </ligand>
    <ligandPart>
        <name>Fe</name>
        <dbReference type="ChEBI" id="CHEBI:18248"/>
    </ligandPart>
</feature>
<comment type="cofactor">
    <cofactor evidence="1">
        <name>heme</name>
        <dbReference type="ChEBI" id="CHEBI:30413"/>
    </cofactor>
</comment>
<comment type="subcellular location">
    <subcellularLocation>
        <location evidence="1">Cytoplasm</location>
    </subcellularLocation>
</comment>
<comment type="similarity">
    <text evidence="3">Belongs to the cytochrome P450 family.</text>
</comment>
<gene>
    <name type="primary">cyp105D1</name>
    <name type="synonym">soyC</name>
</gene>
<dbReference type="EC" id="1.14.-.-"/>
<dbReference type="EMBL" id="X63601">
    <property type="protein sequence ID" value="CAA45146.1"/>
    <property type="molecule type" value="Genomic_DNA"/>
</dbReference>
<dbReference type="PIR" id="S24750">
    <property type="entry name" value="S24750"/>
</dbReference>
<dbReference type="SMR" id="P26911"/>
<dbReference type="GO" id="GO:0005737">
    <property type="term" value="C:cytoplasm"/>
    <property type="evidence" value="ECO:0007669"/>
    <property type="project" value="UniProtKB-SubCell"/>
</dbReference>
<dbReference type="GO" id="GO:0020037">
    <property type="term" value="F:heme binding"/>
    <property type="evidence" value="ECO:0007669"/>
    <property type="project" value="InterPro"/>
</dbReference>
<dbReference type="GO" id="GO:0005506">
    <property type="term" value="F:iron ion binding"/>
    <property type="evidence" value="ECO:0007669"/>
    <property type="project" value="InterPro"/>
</dbReference>
<dbReference type="GO" id="GO:0004497">
    <property type="term" value="F:monooxygenase activity"/>
    <property type="evidence" value="ECO:0007669"/>
    <property type="project" value="UniProtKB-KW"/>
</dbReference>
<dbReference type="GO" id="GO:0016705">
    <property type="term" value="F:oxidoreductase activity, acting on paired donors, with incorporation or reduction of molecular oxygen"/>
    <property type="evidence" value="ECO:0007669"/>
    <property type="project" value="InterPro"/>
</dbReference>
<dbReference type="CDD" id="cd11030">
    <property type="entry name" value="CYP105-like"/>
    <property type="match status" value="1"/>
</dbReference>
<dbReference type="FunFam" id="1.10.630.10:FF:000018">
    <property type="entry name" value="Cytochrome P450 monooxygenase"/>
    <property type="match status" value="1"/>
</dbReference>
<dbReference type="Gene3D" id="1.10.630.10">
    <property type="entry name" value="Cytochrome P450"/>
    <property type="match status" value="1"/>
</dbReference>
<dbReference type="InterPro" id="IPR001128">
    <property type="entry name" value="Cyt_P450"/>
</dbReference>
<dbReference type="InterPro" id="IPR002397">
    <property type="entry name" value="Cyt_P450_B"/>
</dbReference>
<dbReference type="InterPro" id="IPR017972">
    <property type="entry name" value="Cyt_P450_CS"/>
</dbReference>
<dbReference type="InterPro" id="IPR036396">
    <property type="entry name" value="Cyt_P450_sf"/>
</dbReference>
<dbReference type="PANTHER" id="PTHR46696:SF1">
    <property type="entry name" value="CYTOCHROME P450 YJIB-RELATED"/>
    <property type="match status" value="1"/>
</dbReference>
<dbReference type="PANTHER" id="PTHR46696">
    <property type="entry name" value="P450, PUTATIVE (EUROFUNG)-RELATED"/>
    <property type="match status" value="1"/>
</dbReference>
<dbReference type="Pfam" id="PF00067">
    <property type="entry name" value="p450"/>
    <property type="match status" value="2"/>
</dbReference>
<dbReference type="PRINTS" id="PR00359">
    <property type="entry name" value="BP450"/>
</dbReference>
<dbReference type="PRINTS" id="PR00385">
    <property type="entry name" value="P450"/>
</dbReference>
<dbReference type="SUPFAM" id="SSF48264">
    <property type="entry name" value="Cytochrome P450"/>
    <property type="match status" value="1"/>
</dbReference>
<dbReference type="PROSITE" id="PS00086">
    <property type="entry name" value="CYTOCHROME_P450"/>
    <property type="match status" value="1"/>
</dbReference>
<keyword id="KW-0963">Cytoplasm</keyword>
<keyword id="KW-0349">Heme</keyword>
<keyword id="KW-0408">Iron</keyword>
<keyword id="KW-0479">Metal-binding</keyword>
<keyword id="KW-0503">Monooxygenase</keyword>
<keyword id="KW-0560">Oxidoreductase</keyword>
<sequence length="412" mass="45411">MTESTTDPARQNLDPTSPAPATSFPQDRGCPYHPPAGYAPLREGRPLSRVTLFDGRPVWAVTGHALARRLLADPRLSTDRSHPDFPVPAERFAGAQRRRVALLGVDDPEHNTQRRMLIPTFSVKRIGALRPRIQETVDRLLDAMERQGPPAELVSAFALPVPSMVICALLGVPYADHAFFEERSQRLLRGPGADDVNRARDELEEYLGALIDRKRAEPGDGLLDELIHRDHPDGPVDREQLVAFAVILLIAGHETTANMISLGTFTLLSHPEQLAALRAGGTSTAVVVEELLRFLSIAEGLQRLATEDMEVDGATIRKGEGVVFSTSLINRDADVFPRAETLDWDRPARHHLAFGFGVHQCLGQNLARAELDIAMRTLFERLPGLRLAVPAHEIRHKPGDTIQGLLDLPVAW</sequence>
<reference key="1">
    <citation type="journal article" date="1992" name="Mol. Microbiol.">
        <title>Cloning, nucleotide sequence determination and expression of the genes encoding cytochrome P-450soy (soyC) and ferredoxinsoy (soyB) from Streptomyces griseus.</title>
        <authorList>
            <person name="Trower M.K."/>
            <person name="Lenstra R."/>
            <person name="Omer C."/>
            <person name="Buchholz S.E."/>
            <person name="Sariaslani F.S."/>
        </authorList>
    </citation>
    <scope>NUCLEOTIDE SEQUENCE [GENOMIC DNA]</scope>
    <source>
        <strain>ATCC 13273 / DSM 12135 / NBRC 3746</strain>
    </source>
</reference>
<organism>
    <name type="scientific">Streptomyces griseus</name>
    <dbReference type="NCBI Taxonomy" id="1911"/>
    <lineage>
        <taxon>Bacteria</taxon>
        <taxon>Bacillati</taxon>
        <taxon>Actinomycetota</taxon>
        <taxon>Actinomycetes</taxon>
        <taxon>Kitasatosporales</taxon>
        <taxon>Streptomycetaceae</taxon>
        <taxon>Streptomyces</taxon>
    </lineage>
</organism>
<name>CPXH_STRGR</name>
<proteinExistence type="inferred from homology"/>